<organismHost>
    <name type="scientific">Aedes vexans</name>
    <name type="common">Inland floodwater mosquito</name>
    <name type="synonym">Culex vexans</name>
    <dbReference type="NCBI Taxonomy" id="7163"/>
</organismHost>
<organismHost>
    <name type="scientific">Culex territans</name>
    <dbReference type="NCBI Taxonomy" id="42431"/>
</organismHost>
<organismHost>
    <name type="scientific">Culiseta annulata</name>
    <dbReference type="NCBI Taxonomy" id="332058"/>
</organismHost>
<organismHost>
    <name type="scientific">Ochlerotatus sollicitans</name>
    <name type="common">eastern saltmarsh mosquito</name>
    <dbReference type="NCBI Taxonomy" id="310513"/>
</organismHost>
<organismHost>
    <name type="scientific">Ochlerotatus taeniorhynchus</name>
    <name type="common">Black salt marsh mosquito</name>
    <name type="synonym">Aedes taeniorhynchus</name>
    <dbReference type="NCBI Taxonomy" id="329105"/>
</organismHost>
<organismHost>
    <name type="scientific">Psorophora ferox</name>
    <dbReference type="NCBI Taxonomy" id="7183"/>
</organismHost>
<name>005L_IIV3</name>
<organism>
    <name type="scientific">Invertebrate iridescent virus 3</name>
    <name type="common">IIV-3</name>
    <name type="synonym">Mosquito iridescent virus</name>
    <dbReference type="NCBI Taxonomy" id="345201"/>
    <lineage>
        <taxon>Viruses</taxon>
        <taxon>Varidnaviria</taxon>
        <taxon>Bamfordvirae</taxon>
        <taxon>Nucleocytoviricota</taxon>
        <taxon>Megaviricetes</taxon>
        <taxon>Pimascovirales</taxon>
        <taxon>Iridoviridae</taxon>
        <taxon>Betairidovirinae</taxon>
        <taxon>Chloriridovirus</taxon>
    </lineage>
</organism>
<protein>
    <recommendedName>
        <fullName>Uncharacterized protein 005L</fullName>
    </recommendedName>
</protein>
<dbReference type="EMBL" id="DQ643392">
    <property type="protein sequence ID" value="ABF82035.1"/>
    <property type="molecule type" value="Genomic_DNA"/>
</dbReference>
<dbReference type="RefSeq" id="YP_654577.1">
    <property type="nucleotide sequence ID" value="NC_008187.1"/>
</dbReference>
<dbReference type="KEGG" id="vg:4156254"/>
<dbReference type="Proteomes" id="UP000001358">
    <property type="component" value="Genome"/>
</dbReference>
<reference key="1">
    <citation type="journal article" date="2006" name="J. Virol.">
        <title>Genome of invertebrate iridescent virus type 3 (mosquito iridescent virus).</title>
        <authorList>
            <person name="Delhon G."/>
            <person name="Tulman E.R."/>
            <person name="Afonso C.L."/>
            <person name="Lu Z."/>
            <person name="Becnel J.J."/>
            <person name="Moser B.A."/>
            <person name="Kutish G.F."/>
            <person name="Rock D.L."/>
        </authorList>
    </citation>
    <scope>NUCLEOTIDE SEQUENCE [LARGE SCALE GENOMIC DNA]</scope>
</reference>
<proteinExistence type="inferred from homology"/>
<feature type="signal peptide" evidence="1">
    <location>
        <begin position="1"/>
        <end position="24"/>
    </location>
</feature>
<feature type="chain" id="PRO_0000377940" description="Uncharacterized protein 005L">
    <location>
        <begin position="25"/>
        <end position="217"/>
    </location>
</feature>
<evidence type="ECO:0000255" key="1"/>
<sequence length="217" mass="23854">MRYTVLIALQGALLLLLLIDDGQGQSPYPYPGMPCNSSRQCGLGTCVHSRCAHCSSDGTLCSPEDPTMVWPCCPESSCQLVVGLPSLVNHYNCLPNQCTDSSQCPGGFGCMTRRSKCELCKADGEACNSPYLDWRKDKECCSGYCHTEARGLEGVCIDPKKIFCTPKNPWQLAPYPPSYHQPTTLRPPTSLYDSWLMSGFLVKSTTAPSTQEEEDDY</sequence>
<gene>
    <name type="ORF">IIV3-005L</name>
</gene>
<keyword id="KW-1185">Reference proteome</keyword>
<keyword id="KW-0732">Signal</keyword>
<accession>Q197F5</accession>